<reference key="1">
    <citation type="journal article" date="2024" name="J. Biol. Chem.">
        <title>Peptide toxins that target vertebrate voltage-gated sodium channels underly the painful stings of harvester ants.</title>
        <authorList>
            <person name="Robinson S.D."/>
            <person name="Deuis J.R."/>
            <person name="Niu P."/>
            <person name="Touchard A."/>
            <person name="Mueller A."/>
            <person name="Schendel V."/>
            <person name="Brinkwirth N."/>
            <person name="King G.F."/>
            <person name="Vetter I."/>
            <person name="Schmidt J.O."/>
        </authorList>
    </citation>
    <scope>NUCLEOTIDE SEQUENCE [MRNA]</scope>
    <scope>IDENTIFICATION BY MASS SPECTROMETRY</scope>
    <scope>SUBCELLULAR LOCATION</scope>
    <scope>SYNTHESIS OF 60-81</scope>
    <scope>BIOASSAY</scope>
    <scope>TOXIC DOSE</scope>
    <scope>AMIDATION AT LEU-81</scope>
    <source>
        <tissue>Venom</tissue>
        <tissue>Venom gland</tissue>
    </source>
</reference>
<organism>
    <name type="scientific">Pogonomyrmex maricopa</name>
    <name type="common">Maricopa harvester ant</name>
    <dbReference type="NCBI Taxonomy" id="144040"/>
    <lineage>
        <taxon>Eukaryota</taxon>
        <taxon>Metazoa</taxon>
        <taxon>Ecdysozoa</taxon>
        <taxon>Arthropoda</taxon>
        <taxon>Hexapoda</taxon>
        <taxon>Insecta</taxon>
        <taxon>Pterygota</taxon>
        <taxon>Neoptera</taxon>
        <taxon>Endopterygota</taxon>
        <taxon>Hymenoptera</taxon>
        <taxon>Apocrita</taxon>
        <taxon>Aculeata</taxon>
        <taxon>Formicoidea</taxon>
        <taxon>Formicidae</taxon>
        <taxon>Myrmicinae</taxon>
        <taxon>Pogonomyrmex</taxon>
    </lineage>
</organism>
<name>TX3A_POGMA</name>
<evidence type="ECO:0000255" key="1"/>
<evidence type="ECO:0000269" key="2">
    <source>
    </source>
</evidence>
<evidence type="ECO:0000303" key="3">
    <source>
    </source>
</evidence>
<evidence type="ECO:0000305" key="4"/>
<evidence type="ECO:0000305" key="5">
    <source>
    </source>
</evidence>
<protein>
    <recommendedName>
        <fullName evidence="3">Myrmicitoxin(1)-Pm3a</fullName>
        <shortName evidence="3">MYRTX(1)-Pm3a</shortName>
    </recommendedName>
</protein>
<proteinExistence type="evidence at protein level"/>
<sequence length="82" mass="8538">MEIPKLLYIAVIAIGLSGSLTCATPLANPLADPEAEAEAKATAEATAEAIAEALAEPEPGLPILALFVTIPFIHHYLMEKLG</sequence>
<feature type="signal peptide" evidence="1">
    <location>
        <begin position="1"/>
        <end position="23"/>
    </location>
</feature>
<feature type="propeptide" id="PRO_0000461237" evidence="4">
    <location>
        <begin position="24"/>
        <end position="59"/>
    </location>
</feature>
<feature type="peptide" id="PRO_0000461238" description="Myrmicitoxin(1)-Pm3a" evidence="2">
    <location>
        <begin position="60"/>
        <end position="81"/>
    </location>
</feature>
<feature type="modified residue" description="Leucine amide" evidence="2">
    <location>
        <position position="81"/>
    </location>
</feature>
<dbReference type="EMBL" id="OR128460">
    <property type="protein sequence ID" value="WMI02498.1"/>
    <property type="molecule type" value="mRNA"/>
</dbReference>
<dbReference type="GO" id="GO:0005576">
    <property type="term" value="C:extracellular region"/>
    <property type="evidence" value="ECO:0007669"/>
    <property type="project" value="UniProtKB-SubCell"/>
</dbReference>
<dbReference type="GO" id="GO:0017080">
    <property type="term" value="F:sodium channel regulator activity"/>
    <property type="evidence" value="ECO:0007669"/>
    <property type="project" value="UniProtKB-KW"/>
</dbReference>
<dbReference type="GO" id="GO:0090729">
    <property type="term" value="F:toxin activity"/>
    <property type="evidence" value="ECO:0007669"/>
    <property type="project" value="UniProtKB-KW"/>
</dbReference>
<keyword id="KW-0027">Amidation</keyword>
<keyword id="KW-0872">Ion channel impairing toxin</keyword>
<keyword id="KW-0528">Neurotoxin</keyword>
<keyword id="KW-0964">Secreted</keyword>
<keyword id="KW-0732">Signal</keyword>
<keyword id="KW-0800">Toxin</keyword>
<keyword id="KW-0738">Voltage-gated sodium channel impairing toxin</keyword>
<accession>P0DRD2</accession>
<comment type="function">
    <text evidence="2">Toxin that causes a slowly developing temporary paralysis when intrathoracically injected into insects (blowflies). Does not cause spontaneous nocifensive behaviors by intraplantar injection in mice.</text>
</comment>
<comment type="subcellular location">
    <subcellularLocation>
        <location evidence="2">Secreted</location>
    </subcellularLocation>
</comment>
<comment type="tissue specificity">
    <text evidence="5">Expressed by the venom gland.</text>
</comment>
<comment type="toxic dose">
    <text evidence="2">PD(50) [1 hour] is 38.1 nmol/g when intrathoracically injected into insects (blowfly L.caesar).</text>
</comment>
<comment type="miscellaneous">
    <text evidence="2">Negative results: does not exhibit hemolytic and cytotoxic activities on HEK293 cells.</text>
</comment>
<comment type="similarity">
    <text evidence="4">Belongs to the formicidae venom clade 1 family.</text>
</comment>